<feature type="chain" id="PRO_1000002575" description="Holliday junction branch migration complex subunit RuvA">
    <location>
        <begin position="1"/>
        <end position="196"/>
    </location>
</feature>
<feature type="region of interest" description="Domain I" evidence="1">
    <location>
        <begin position="1"/>
        <end position="63"/>
    </location>
</feature>
<feature type="region of interest" description="Domain II" evidence="1">
    <location>
        <begin position="64"/>
        <end position="142"/>
    </location>
</feature>
<feature type="region of interest" description="Flexible linker" evidence="1">
    <location>
        <begin position="143"/>
        <end position="146"/>
    </location>
</feature>
<feature type="region of interest" description="Domain III" evidence="1">
    <location>
        <begin position="147"/>
        <end position="196"/>
    </location>
</feature>
<proteinExistence type="inferred from homology"/>
<dbReference type="EMBL" id="CP000419">
    <property type="protein sequence ID" value="ABJ65444.1"/>
    <property type="molecule type" value="Genomic_DNA"/>
</dbReference>
<dbReference type="RefSeq" id="WP_011680603.1">
    <property type="nucleotide sequence ID" value="NC_008532.1"/>
</dbReference>
<dbReference type="SMR" id="Q03MX8"/>
<dbReference type="KEGG" id="ste:STER_0074"/>
<dbReference type="HOGENOM" id="CLU_087936_1_0_9"/>
<dbReference type="GO" id="GO:0005737">
    <property type="term" value="C:cytoplasm"/>
    <property type="evidence" value="ECO:0007669"/>
    <property type="project" value="UniProtKB-SubCell"/>
</dbReference>
<dbReference type="GO" id="GO:0009379">
    <property type="term" value="C:Holliday junction helicase complex"/>
    <property type="evidence" value="ECO:0007669"/>
    <property type="project" value="InterPro"/>
</dbReference>
<dbReference type="GO" id="GO:0048476">
    <property type="term" value="C:Holliday junction resolvase complex"/>
    <property type="evidence" value="ECO:0007669"/>
    <property type="project" value="UniProtKB-UniRule"/>
</dbReference>
<dbReference type="GO" id="GO:0005524">
    <property type="term" value="F:ATP binding"/>
    <property type="evidence" value="ECO:0007669"/>
    <property type="project" value="InterPro"/>
</dbReference>
<dbReference type="GO" id="GO:0000400">
    <property type="term" value="F:four-way junction DNA binding"/>
    <property type="evidence" value="ECO:0007669"/>
    <property type="project" value="UniProtKB-UniRule"/>
</dbReference>
<dbReference type="GO" id="GO:0009378">
    <property type="term" value="F:four-way junction helicase activity"/>
    <property type="evidence" value="ECO:0007669"/>
    <property type="project" value="InterPro"/>
</dbReference>
<dbReference type="GO" id="GO:0006310">
    <property type="term" value="P:DNA recombination"/>
    <property type="evidence" value="ECO:0007669"/>
    <property type="project" value="UniProtKB-UniRule"/>
</dbReference>
<dbReference type="GO" id="GO:0006281">
    <property type="term" value="P:DNA repair"/>
    <property type="evidence" value="ECO:0007669"/>
    <property type="project" value="UniProtKB-UniRule"/>
</dbReference>
<dbReference type="CDD" id="cd14332">
    <property type="entry name" value="UBA_RuvA_C"/>
    <property type="match status" value="1"/>
</dbReference>
<dbReference type="Gene3D" id="1.10.150.20">
    <property type="entry name" value="5' to 3' exonuclease, C-terminal subdomain"/>
    <property type="match status" value="1"/>
</dbReference>
<dbReference type="Gene3D" id="1.10.8.10">
    <property type="entry name" value="DNA helicase RuvA subunit, C-terminal domain"/>
    <property type="match status" value="1"/>
</dbReference>
<dbReference type="Gene3D" id="2.40.50.140">
    <property type="entry name" value="Nucleic acid-binding proteins"/>
    <property type="match status" value="1"/>
</dbReference>
<dbReference type="HAMAP" id="MF_00031">
    <property type="entry name" value="DNA_HJ_migration_RuvA"/>
    <property type="match status" value="1"/>
</dbReference>
<dbReference type="InterPro" id="IPR013849">
    <property type="entry name" value="DNA_helicase_Holl-junc_RuvA_I"/>
</dbReference>
<dbReference type="InterPro" id="IPR003583">
    <property type="entry name" value="Hlx-hairpin-Hlx_DNA-bd_motif"/>
</dbReference>
<dbReference type="InterPro" id="IPR012340">
    <property type="entry name" value="NA-bd_OB-fold"/>
</dbReference>
<dbReference type="InterPro" id="IPR000085">
    <property type="entry name" value="RuvA"/>
</dbReference>
<dbReference type="InterPro" id="IPR010994">
    <property type="entry name" value="RuvA_2-like"/>
</dbReference>
<dbReference type="InterPro" id="IPR011114">
    <property type="entry name" value="RuvA_C"/>
</dbReference>
<dbReference type="InterPro" id="IPR036267">
    <property type="entry name" value="RuvA_C_sf"/>
</dbReference>
<dbReference type="NCBIfam" id="TIGR00084">
    <property type="entry name" value="ruvA"/>
    <property type="match status" value="1"/>
</dbReference>
<dbReference type="Pfam" id="PF14520">
    <property type="entry name" value="HHH_5"/>
    <property type="match status" value="1"/>
</dbReference>
<dbReference type="Pfam" id="PF07499">
    <property type="entry name" value="RuvA_C"/>
    <property type="match status" value="1"/>
</dbReference>
<dbReference type="Pfam" id="PF01330">
    <property type="entry name" value="RuvA_N"/>
    <property type="match status" value="1"/>
</dbReference>
<dbReference type="SMART" id="SM00278">
    <property type="entry name" value="HhH1"/>
    <property type="match status" value="2"/>
</dbReference>
<dbReference type="SUPFAM" id="SSF46929">
    <property type="entry name" value="DNA helicase RuvA subunit, C-terminal domain"/>
    <property type="match status" value="1"/>
</dbReference>
<dbReference type="SUPFAM" id="SSF50249">
    <property type="entry name" value="Nucleic acid-binding proteins"/>
    <property type="match status" value="1"/>
</dbReference>
<dbReference type="SUPFAM" id="SSF47781">
    <property type="entry name" value="RuvA domain 2-like"/>
    <property type="match status" value="1"/>
</dbReference>
<organism>
    <name type="scientific">Streptococcus thermophilus (strain ATCC BAA-491 / LMD-9)</name>
    <dbReference type="NCBI Taxonomy" id="322159"/>
    <lineage>
        <taxon>Bacteria</taxon>
        <taxon>Bacillati</taxon>
        <taxon>Bacillota</taxon>
        <taxon>Bacilli</taxon>
        <taxon>Lactobacillales</taxon>
        <taxon>Streptococcaceae</taxon>
        <taxon>Streptococcus</taxon>
    </lineage>
</organism>
<evidence type="ECO:0000255" key="1">
    <source>
        <dbReference type="HAMAP-Rule" id="MF_00031"/>
    </source>
</evidence>
<comment type="function">
    <text evidence="1">The RuvA-RuvB-RuvC complex processes Holliday junction (HJ) DNA during genetic recombination and DNA repair, while the RuvA-RuvB complex plays an important role in the rescue of blocked DNA replication forks via replication fork reversal (RFR). RuvA specifically binds to HJ cruciform DNA, conferring on it an open structure. The RuvB hexamer acts as an ATP-dependent pump, pulling dsDNA into and through the RuvAB complex. HJ branch migration allows RuvC to scan DNA until it finds its consensus sequence, where it cleaves and resolves the cruciform DNA.</text>
</comment>
<comment type="subunit">
    <text evidence="1">Homotetramer. Forms an RuvA(8)-RuvB(12)-Holliday junction (HJ) complex. HJ DNA is sandwiched between 2 RuvA tetramers; dsDNA enters through RuvA and exits via RuvB. An RuvB hexamer assembles on each DNA strand where it exits the tetramer. Each RuvB hexamer is contacted by two RuvA subunits (via domain III) on 2 adjacent RuvB subunits; this complex drives branch migration. In the full resolvosome a probable DNA-RuvA(4)-RuvB(12)-RuvC(2) complex forms which resolves the HJ.</text>
</comment>
<comment type="subcellular location">
    <subcellularLocation>
        <location evidence="1">Cytoplasm</location>
    </subcellularLocation>
</comment>
<comment type="domain">
    <text evidence="1">Has three domains with a flexible linker between the domains II and III and assumes an 'L' shape. Domain III is highly mobile and contacts RuvB.</text>
</comment>
<comment type="similarity">
    <text evidence="1">Belongs to the RuvA family.</text>
</comment>
<accession>Q03MX8</accession>
<name>RUVA_STRTD</name>
<protein>
    <recommendedName>
        <fullName evidence="1">Holliday junction branch migration complex subunit RuvA</fullName>
    </recommendedName>
</protein>
<gene>
    <name evidence="1" type="primary">ruvA</name>
    <name type="ordered locus">STER_0074</name>
</gene>
<reference key="1">
    <citation type="journal article" date="2006" name="Proc. Natl. Acad. Sci. U.S.A.">
        <title>Comparative genomics of the lactic acid bacteria.</title>
        <authorList>
            <person name="Makarova K.S."/>
            <person name="Slesarev A."/>
            <person name="Wolf Y.I."/>
            <person name="Sorokin A."/>
            <person name="Mirkin B."/>
            <person name="Koonin E.V."/>
            <person name="Pavlov A."/>
            <person name="Pavlova N."/>
            <person name="Karamychev V."/>
            <person name="Polouchine N."/>
            <person name="Shakhova V."/>
            <person name="Grigoriev I."/>
            <person name="Lou Y."/>
            <person name="Rohksar D."/>
            <person name="Lucas S."/>
            <person name="Huang K."/>
            <person name="Goodstein D.M."/>
            <person name="Hawkins T."/>
            <person name="Plengvidhya V."/>
            <person name="Welker D."/>
            <person name="Hughes J."/>
            <person name="Goh Y."/>
            <person name="Benson A."/>
            <person name="Baldwin K."/>
            <person name="Lee J.-H."/>
            <person name="Diaz-Muniz I."/>
            <person name="Dosti B."/>
            <person name="Smeianov V."/>
            <person name="Wechter W."/>
            <person name="Barabote R."/>
            <person name="Lorca G."/>
            <person name="Altermann E."/>
            <person name="Barrangou R."/>
            <person name="Ganesan B."/>
            <person name="Xie Y."/>
            <person name="Rawsthorne H."/>
            <person name="Tamir D."/>
            <person name="Parker C."/>
            <person name="Breidt F."/>
            <person name="Broadbent J.R."/>
            <person name="Hutkins R."/>
            <person name="O'Sullivan D."/>
            <person name="Steele J."/>
            <person name="Unlu G."/>
            <person name="Saier M.H. Jr."/>
            <person name="Klaenhammer T."/>
            <person name="Richardson P."/>
            <person name="Kozyavkin S."/>
            <person name="Weimer B.C."/>
            <person name="Mills D.A."/>
        </authorList>
    </citation>
    <scope>NUCLEOTIDE SEQUENCE [LARGE SCALE GENOMIC DNA]</scope>
    <source>
        <strain>ATCC BAA-491 / LMD-9</strain>
    </source>
</reference>
<sequence length="196" mass="21684">MYDYIKGTLVKITAKHIVIETNGLGYIVTVANPYSFSDQMNQTIQVYLHQVIRDDAHLLFGFHTEDEKEVFLKLISVSGIGPTTALAIVAVDDNQGLVAAIDNSDIKYLMKFPKIGKKTAQQMVLDLAGKFAELPAETTNTTANQTAGNQQLDEAMEALLALGYKATELKKVKAFFEDTNETAEQYIKSALKMLMK</sequence>
<keyword id="KW-0963">Cytoplasm</keyword>
<keyword id="KW-0227">DNA damage</keyword>
<keyword id="KW-0233">DNA recombination</keyword>
<keyword id="KW-0234">DNA repair</keyword>
<keyword id="KW-0238">DNA-binding</keyword>